<dbReference type="EC" id="3.6.1.27" evidence="1"/>
<dbReference type="EMBL" id="CP000769">
    <property type="protein sequence ID" value="ABS24381.1"/>
    <property type="molecule type" value="Genomic_DNA"/>
</dbReference>
<dbReference type="SMR" id="A7H6N5"/>
<dbReference type="STRING" id="404589.Anae109_0163"/>
<dbReference type="KEGG" id="afw:Anae109_0163"/>
<dbReference type="eggNOG" id="COG1968">
    <property type="taxonomic scope" value="Bacteria"/>
</dbReference>
<dbReference type="HOGENOM" id="CLU_060296_1_0_7"/>
<dbReference type="OrthoDB" id="9808289at2"/>
<dbReference type="Proteomes" id="UP000006382">
    <property type="component" value="Chromosome"/>
</dbReference>
<dbReference type="GO" id="GO:0005886">
    <property type="term" value="C:plasma membrane"/>
    <property type="evidence" value="ECO:0007669"/>
    <property type="project" value="UniProtKB-SubCell"/>
</dbReference>
<dbReference type="GO" id="GO:0050380">
    <property type="term" value="F:undecaprenyl-diphosphatase activity"/>
    <property type="evidence" value="ECO:0007669"/>
    <property type="project" value="UniProtKB-UniRule"/>
</dbReference>
<dbReference type="GO" id="GO:0071555">
    <property type="term" value="P:cell wall organization"/>
    <property type="evidence" value="ECO:0007669"/>
    <property type="project" value="UniProtKB-KW"/>
</dbReference>
<dbReference type="GO" id="GO:0009252">
    <property type="term" value="P:peptidoglycan biosynthetic process"/>
    <property type="evidence" value="ECO:0007669"/>
    <property type="project" value="UniProtKB-KW"/>
</dbReference>
<dbReference type="GO" id="GO:0008360">
    <property type="term" value="P:regulation of cell shape"/>
    <property type="evidence" value="ECO:0007669"/>
    <property type="project" value="UniProtKB-KW"/>
</dbReference>
<dbReference type="GO" id="GO:0046677">
    <property type="term" value="P:response to antibiotic"/>
    <property type="evidence" value="ECO:0007669"/>
    <property type="project" value="UniProtKB-UniRule"/>
</dbReference>
<dbReference type="HAMAP" id="MF_01006">
    <property type="entry name" value="Undec_diphosphatase"/>
    <property type="match status" value="1"/>
</dbReference>
<dbReference type="InterPro" id="IPR003824">
    <property type="entry name" value="UppP"/>
</dbReference>
<dbReference type="PANTHER" id="PTHR30622">
    <property type="entry name" value="UNDECAPRENYL-DIPHOSPHATASE"/>
    <property type="match status" value="1"/>
</dbReference>
<dbReference type="PANTHER" id="PTHR30622:SF4">
    <property type="entry name" value="UNDECAPRENYL-DIPHOSPHATASE"/>
    <property type="match status" value="1"/>
</dbReference>
<dbReference type="Pfam" id="PF02673">
    <property type="entry name" value="BacA"/>
    <property type="match status" value="1"/>
</dbReference>
<proteinExistence type="inferred from homology"/>
<organism>
    <name type="scientific">Anaeromyxobacter sp. (strain Fw109-5)</name>
    <dbReference type="NCBI Taxonomy" id="404589"/>
    <lineage>
        <taxon>Bacteria</taxon>
        <taxon>Pseudomonadati</taxon>
        <taxon>Myxococcota</taxon>
        <taxon>Myxococcia</taxon>
        <taxon>Myxococcales</taxon>
        <taxon>Cystobacterineae</taxon>
        <taxon>Anaeromyxobacteraceae</taxon>
        <taxon>Anaeromyxobacter</taxon>
    </lineage>
</organism>
<comment type="function">
    <text evidence="1">Catalyzes the dephosphorylation of undecaprenyl diphosphate (UPP). Confers resistance to bacitracin.</text>
</comment>
<comment type="catalytic activity">
    <reaction evidence="1">
        <text>di-trans,octa-cis-undecaprenyl diphosphate + H2O = di-trans,octa-cis-undecaprenyl phosphate + phosphate + H(+)</text>
        <dbReference type="Rhea" id="RHEA:28094"/>
        <dbReference type="ChEBI" id="CHEBI:15377"/>
        <dbReference type="ChEBI" id="CHEBI:15378"/>
        <dbReference type="ChEBI" id="CHEBI:43474"/>
        <dbReference type="ChEBI" id="CHEBI:58405"/>
        <dbReference type="ChEBI" id="CHEBI:60392"/>
        <dbReference type="EC" id="3.6.1.27"/>
    </reaction>
</comment>
<comment type="subcellular location">
    <subcellularLocation>
        <location evidence="1">Cell inner membrane</location>
        <topology evidence="1">Multi-pass membrane protein</topology>
    </subcellularLocation>
</comment>
<comment type="miscellaneous">
    <text>Bacitracin is thought to be involved in the inhibition of peptidoglycan synthesis by sequestering undecaprenyl diphosphate, thereby reducing the pool of lipid carrier available.</text>
</comment>
<comment type="similarity">
    <text evidence="1">Belongs to the UppP family.</text>
</comment>
<gene>
    <name evidence="1" type="primary">uppP</name>
    <name type="ordered locus">Anae109_0163</name>
</gene>
<keyword id="KW-0046">Antibiotic resistance</keyword>
<keyword id="KW-0997">Cell inner membrane</keyword>
<keyword id="KW-1003">Cell membrane</keyword>
<keyword id="KW-0133">Cell shape</keyword>
<keyword id="KW-0961">Cell wall biogenesis/degradation</keyword>
<keyword id="KW-0378">Hydrolase</keyword>
<keyword id="KW-0472">Membrane</keyword>
<keyword id="KW-0573">Peptidoglycan synthesis</keyword>
<keyword id="KW-1185">Reference proteome</keyword>
<keyword id="KW-0812">Transmembrane</keyword>
<keyword id="KW-1133">Transmembrane helix</keyword>
<feature type="chain" id="PRO_1000062786" description="Undecaprenyl-diphosphatase">
    <location>
        <begin position="1"/>
        <end position="304"/>
    </location>
</feature>
<feature type="transmembrane region" description="Helical" evidence="1">
    <location>
        <begin position="1"/>
        <end position="21"/>
    </location>
</feature>
<feature type="transmembrane region" description="Helical" evidence="1">
    <location>
        <begin position="54"/>
        <end position="74"/>
    </location>
</feature>
<feature type="transmembrane region" description="Helical" evidence="1">
    <location>
        <begin position="90"/>
        <end position="110"/>
    </location>
</feature>
<feature type="transmembrane region" description="Helical" evidence="1">
    <location>
        <begin position="114"/>
        <end position="134"/>
    </location>
</feature>
<feature type="transmembrane region" description="Helical" evidence="1">
    <location>
        <begin position="192"/>
        <end position="212"/>
    </location>
</feature>
<feature type="transmembrane region" description="Helical" evidence="1">
    <location>
        <begin position="225"/>
        <end position="245"/>
    </location>
</feature>
<feature type="transmembrane region" description="Helical" evidence="1">
    <location>
        <begin position="253"/>
        <end position="273"/>
    </location>
</feature>
<protein>
    <recommendedName>
        <fullName evidence="1">Undecaprenyl-diphosphatase</fullName>
        <ecNumber evidence="1">3.6.1.27</ecNumber>
    </recommendedName>
    <alternativeName>
        <fullName evidence="1">Bacitracin resistance protein</fullName>
    </alternativeName>
    <alternativeName>
        <fullName evidence="1">Undecaprenyl pyrophosphate phosphatase</fullName>
    </alternativeName>
</protein>
<sequence>MSLLAAVFLGVLQAATEFLPVSSTAHLLVFGELLGHDLADPRFRAFATIIQTGTTLAVLVYFRTEILSLLAAGLRSLARRRPLETPQSRLAWFIVLGTVPAAVLGKLFEERIEALGNWVIAGSLVVLGLVLLAAERYARHLRTVEDVGARDAVLIGLGQALALVPGSSRSGTTITAGMLLGFTREAAARFSFLLSVPIILGAGGYKLWKTVPVLRGEPSWALATLVGTAVSAVAGYLVIDWLLGWLRTRTTHLFVVWRIAAGVALAILIWQGVLPAGHASVSAPAVEAARAADPDAPLGAALRR</sequence>
<name>UPPP_ANADF</name>
<evidence type="ECO:0000255" key="1">
    <source>
        <dbReference type="HAMAP-Rule" id="MF_01006"/>
    </source>
</evidence>
<reference key="1">
    <citation type="journal article" date="2015" name="Genome Announc.">
        <title>Complete genome sequence of Anaeromyxobacter sp. Fw109-5, an anaerobic, metal-reducing bacterium isolated from a contaminated subsurface environment.</title>
        <authorList>
            <person name="Hwang C."/>
            <person name="Copeland A."/>
            <person name="Lucas S."/>
            <person name="Lapidus A."/>
            <person name="Barry K."/>
            <person name="Glavina Del Rio T."/>
            <person name="Dalin E."/>
            <person name="Tice H."/>
            <person name="Pitluck S."/>
            <person name="Sims D."/>
            <person name="Brettin T."/>
            <person name="Bruce D.C."/>
            <person name="Detter J.C."/>
            <person name="Han C.S."/>
            <person name="Schmutz J."/>
            <person name="Larimer F.W."/>
            <person name="Land M.L."/>
            <person name="Hauser L.J."/>
            <person name="Kyrpides N."/>
            <person name="Lykidis A."/>
            <person name="Richardson P."/>
            <person name="Belieav A."/>
            <person name="Sanford R.A."/>
            <person name="Loeffler F.E."/>
            <person name="Fields M.W."/>
        </authorList>
    </citation>
    <scope>NUCLEOTIDE SEQUENCE [LARGE SCALE GENOMIC DNA]</scope>
    <source>
        <strain>Fw109-5</strain>
    </source>
</reference>
<accession>A7H6N5</accession>